<keyword id="KW-0255">Endonuclease</keyword>
<keyword id="KW-0378">Hydrolase</keyword>
<keyword id="KW-0540">Nuclease</keyword>
<keyword id="KW-0694">RNA-binding</keyword>
<keyword id="KW-0819">tRNA processing</keyword>
<evidence type="ECO:0000255" key="1">
    <source>
        <dbReference type="HAMAP-Rule" id="MF_00227"/>
    </source>
</evidence>
<feature type="chain" id="PRO_1000194605" description="Ribonuclease P protein component">
    <location>
        <begin position="1"/>
        <end position="115"/>
    </location>
</feature>
<protein>
    <recommendedName>
        <fullName evidence="1">Ribonuclease P protein component</fullName>
        <shortName evidence="1">RNase P protein</shortName>
        <shortName evidence="1">RNaseP protein</shortName>
        <ecNumber evidence="1">3.1.26.5</ecNumber>
    </recommendedName>
    <alternativeName>
        <fullName evidence="1">Protein C5</fullName>
    </alternativeName>
</protein>
<gene>
    <name evidence="1" type="primary">rnpA</name>
    <name type="ordered locus">BCB4264_A5614</name>
</gene>
<proteinExistence type="inferred from homology"/>
<accession>B7H7A5</accession>
<reference key="1">
    <citation type="submission" date="2008-10" db="EMBL/GenBank/DDBJ databases">
        <title>Genome sequence of Bacillus cereus B4264.</title>
        <authorList>
            <person name="Dodson R.J."/>
            <person name="Durkin A.S."/>
            <person name="Rosovitz M.J."/>
            <person name="Rasko D.A."/>
            <person name="Hoffmaster A."/>
            <person name="Ravel J."/>
            <person name="Sutton G."/>
        </authorList>
    </citation>
    <scope>NUCLEOTIDE SEQUENCE [LARGE SCALE GENOMIC DNA]</scope>
    <source>
        <strain>B4264</strain>
    </source>
</reference>
<dbReference type="EC" id="3.1.26.5" evidence="1"/>
<dbReference type="EMBL" id="CP001176">
    <property type="protein sequence ID" value="ACK60034.1"/>
    <property type="molecule type" value="Genomic_DNA"/>
</dbReference>
<dbReference type="RefSeq" id="WP_000726619.1">
    <property type="nucleotide sequence ID" value="NZ_VEHB01000004.1"/>
</dbReference>
<dbReference type="SMR" id="B7H7A5"/>
<dbReference type="KEGG" id="bcb:BCB4264_A5614"/>
<dbReference type="HOGENOM" id="CLU_117179_9_1_9"/>
<dbReference type="Proteomes" id="UP000007096">
    <property type="component" value="Chromosome"/>
</dbReference>
<dbReference type="GO" id="GO:0030677">
    <property type="term" value="C:ribonuclease P complex"/>
    <property type="evidence" value="ECO:0007669"/>
    <property type="project" value="TreeGrafter"/>
</dbReference>
<dbReference type="GO" id="GO:0042781">
    <property type="term" value="F:3'-tRNA processing endoribonuclease activity"/>
    <property type="evidence" value="ECO:0007669"/>
    <property type="project" value="TreeGrafter"/>
</dbReference>
<dbReference type="GO" id="GO:0004526">
    <property type="term" value="F:ribonuclease P activity"/>
    <property type="evidence" value="ECO:0007669"/>
    <property type="project" value="UniProtKB-UniRule"/>
</dbReference>
<dbReference type="GO" id="GO:0000049">
    <property type="term" value="F:tRNA binding"/>
    <property type="evidence" value="ECO:0007669"/>
    <property type="project" value="UniProtKB-UniRule"/>
</dbReference>
<dbReference type="GO" id="GO:0001682">
    <property type="term" value="P:tRNA 5'-leader removal"/>
    <property type="evidence" value="ECO:0007669"/>
    <property type="project" value="UniProtKB-UniRule"/>
</dbReference>
<dbReference type="FunFam" id="3.30.230.10:FF:000021">
    <property type="entry name" value="Ribonuclease P protein component"/>
    <property type="match status" value="1"/>
</dbReference>
<dbReference type="Gene3D" id="3.30.230.10">
    <property type="match status" value="1"/>
</dbReference>
<dbReference type="HAMAP" id="MF_00227">
    <property type="entry name" value="RNase_P"/>
    <property type="match status" value="1"/>
</dbReference>
<dbReference type="InterPro" id="IPR020568">
    <property type="entry name" value="Ribosomal_Su5_D2-typ_SF"/>
</dbReference>
<dbReference type="InterPro" id="IPR014721">
    <property type="entry name" value="Ribsml_uS5_D2-typ_fold_subgr"/>
</dbReference>
<dbReference type="InterPro" id="IPR000100">
    <property type="entry name" value="RNase_P"/>
</dbReference>
<dbReference type="InterPro" id="IPR020539">
    <property type="entry name" value="RNase_P_CS"/>
</dbReference>
<dbReference type="NCBIfam" id="TIGR00188">
    <property type="entry name" value="rnpA"/>
    <property type="match status" value="1"/>
</dbReference>
<dbReference type="PANTHER" id="PTHR33992">
    <property type="entry name" value="RIBONUCLEASE P PROTEIN COMPONENT"/>
    <property type="match status" value="1"/>
</dbReference>
<dbReference type="PANTHER" id="PTHR33992:SF1">
    <property type="entry name" value="RIBONUCLEASE P PROTEIN COMPONENT"/>
    <property type="match status" value="1"/>
</dbReference>
<dbReference type="Pfam" id="PF00825">
    <property type="entry name" value="Ribonuclease_P"/>
    <property type="match status" value="1"/>
</dbReference>
<dbReference type="SUPFAM" id="SSF54211">
    <property type="entry name" value="Ribosomal protein S5 domain 2-like"/>
    <property type="match status" value="1"/>
</dbReference>
<dbReference type="PROSITE" id="PS00648">
    <property type="entry name" value="RIBONUCLEASE_P"/>
    <property type="match status" value="1"/>
</dbReference>
<organism>
    <name type="scientific">Bacillus cereus (strain B4264)</name>
    <dbReference type="NCBI Taxonomy" id="405532"/>
    <lineage>
        <taxon>Bacteria</taxon>
        <taxon>Bacillati</taxon>
        <taxon>Bacillota</taxon>
        <taxon>Bacilli</taxon>
        <taxon>Bacillales</taxon>
        <taxon>Bacillaceae</taxon>
        <taxon>Bacillus</taxon>
        <taxon>Bacillus cereus group</taxon>
    </lineage>
</organism>
<sequence>MKKKHRIKKNDEFQAVFQKGKSNANRQFVVYQLDKEEQPNFRIGLSVSKKIGNAVVRNRIKRMVRQAITELKDEIASGKDFVIIARKPCAEMTYEEVKKSLIHVFKRSGMKRIKK</sequence>
<comment type="function">
    <text evidence="1">RNaseP catalyzes the removal of the 5'-leader sequence from pre-tRNA to produce the mature 5'-terminus. It can also cleave other RNA substrates such as 4.5S RNA. The protein component plays an auxiliary but essential role in vivo by binding to the 5'-leader sequence and broadening the substrate specificity of the ribozyme.</text>
</comment>
<comment type="catalytic activity">
    <reaction evidence="1">
        <text>Endonucleolytic cleavage of RNA, removing 5'-extranucleotides from tRNA precursor.</text>
        <dbReference type="EC" id="3.1.26.5"/>
    </reaction>
</comment>
<comment type="subunit">
    <text evidence="1">Consists of a catalytic RNA component (M1 or rnpB) and a protein subunit.</text>
</comment>
<comment type="similarity">
    <text evidence="1">Belongs to the RnpA family.</text>
</comment>
<name>RNPA_BACC4</name>